<organism>
    <name type="scientific">Prochlorococcus marinus (strain MIT 9313)</name>
    <dbReference type="NCBI Taxonomy" id="74547"/>
    <lineage>
        <taxon>Bacteria</taxon>
        <taxon>Bacillati</taxon>
        <taxon>Cyanobacteriota</taxon>
        <taxon>Cyanophyceae</taxon>
        <taxon>Synechococcales</taxon>
        <taxon>Prochlorococcaceae</taxon>
        <taxon>Prochlorococcus</taxon>
    </lineage>
</organism>
<keyword id="KW-0028">Amino-acid biosynthesis</keyword>
<keyword id="KW-0055">Arginine biosynthesis</keyword>
<keyword id="KW-0963">Cytoplasm</keyword>
<keyword id="KW-0521">NADP</keyword>
<keyword id="KW-0560">Oxidoreductase</keyword>
<keyword id="KW-1185">Reference proteome</keyword>
<reference key="1">
    <citation type="journal article" date="2003" name="Nature">
        <title>Genome divergence in two Prochlorococcus ecotypes reflects oceanic niche differentiation.</title>
        <authorList>
            <person name="Rocap G."/>
            <person name="Larimer F.W."/>
            <person name="Lamerdin J.E."/>
            <person name="Malfatti S."/>
            <person name="Chain P."/>
            <person name="Ahlgren N.A."/>
            <person name="Arellano A."/>
            <person name="Coleman M."/>
            <person name="Hauser L."/>
            <person name="Hess W.R."/>
            <person name="Johnson Z.I."/>
            <person name="Land M.L."/>
            <person name="Lindell D."/>
            <person name="Post A.F."/>
            <person name="Regala W."/>
            <person name="Shah M."/>
            <person name="Shaw S.L."/>
            <person name="Steglich C."/>
            <person name="Sullivan M.B."/>
            <person name="Ting C.S."/>
            <person name="Tolonen A."/>
            <person name="Webb E.A."/>
            <person name="Zinser E.R."/>
            <person name="Chisholm S.W."/>
        </authorList>
    </citation>
    <scope>NUCLEOTIDE SEQUENCE [LARGE SCALE GENOMIC DNA]</scope>
    <source>
        <strain>MIT 9313</strain>
    </source>
</reference>
<gene>
    <name evidence="1" type="primary">argC</name>
    <name type="ordered locus">PMT_0709</name>
</gene>
<name>ARGC_PROMM</name>
<comment type="function">
    <text evidence="1">Catalyzes the NADPH-dependent reduction of N-acetyl-5-glutamyl phosphate to yield N-acetyl-L-glutamate 5-semialdehyde.</text>
</comment>
<comment type="catalytic activity">
    <reaction evidence="1">
        <text>N-acetyl-L-glutamate 5-semialdehyde + phosphate + NADP(+) = N-acetyl-L-glutamyl 5-phosphate + NADPH + H(+)</text>
        <dbReference type="Rhea" id="RHEA:21588"/>
        <dbReference type="ChEBI" id="CHEBI:15378"/>
        <dbReference type="ChEBI" id="CHEBI:29123"/>
        <dbReference type="ChEBI" id="CHEBI:43474"/>
        <dbReference type="ChEBI" id="CHEBI:57783"/>
        <dbReference type="ChEBI" id="CHEBI:57936"/>
        <dbReference type="ChEBI" id="CHEBI:58349"/>
        <dbReference type="EC" id="1.2.1.38"/>
    </reaction>
</comment>
<comment type="pathway">
    <text evidence="1">Amino-acid biosynthesis; L-arginine biosynthesis; N(2)-acetyl-L-ornithine from L-glutamate: step 3/4.</text>
</comment>
<comment type="subcellular location">
    <subcellularLocation>
        <location evidence="1">Cytoplasm</location>
    </subcellularLocation>
</comment>
<comment type="similarity">
    <text evidence="1">Belongs to the NAGSA dehydrogenase family. Type 1 subfamily.</text>
</comment>
<comment type="sequence caution" evidence="2">
    <conflict type="erroneous initiation">
        <sequence resource="EMBL-CDS" id="CAE20884"/>
    </conflict>
</comment>
<protein>
    <recommendedName>
        <fullName evidence="1">N-acetyl-gamma-glutamyl-phosphate reductase</fullName>
        <shortName evidence="1">AGPR</shortName>
        <ecNumber evidence="1">1.2.1.38</ecNumber>
    </recommendedName>
    <alternativeName>
        <fullName evidence="1">N-acetyl-glutamate semialdehyde dehydrogenase</fullName>
        <shortName evidence="1">NAGSA dehydrogenase</shortName>
    </alternativeName>
</protein>
<proteinExistence type="inferred from homology"/>
<sequence>MSQVRGSRVAVIGATGYGGLQTIRLLEDHPHLHVTYLGGERSAGRRWSELCPFLPILDDPEVQSPDPDKIAEFADYAVLSLPNGLACQLAPQLLKRNVRVVDLSADFRYRSLEQWKQVYVHEAQNLNRDDVQLCREAVYGLPEWKGPEIAVANLVAAPGCFPTASLLPLLPFLKQGLIENDGLIIDAKTGTSGGGRVAKEQFLLAEASESIMPYGVVGHRHTSEIEQLASEVAGQPIELQFTPHLVPMVRGLLATVYGRLRDPGLTAEDCTTVLKAVYRHHPCIDVLPVGTYPATKWVKYSNKAVLSVQVDNRNSRLVLMSAVDNLIKGQAGQGVQCLNLMAGLPPTTGMSLLTFYP</sequence>
<feature type="chain" id="PRO_0000112435" description="N-acetyl-gamma-glutamyl-phosphate reductase">
    <location>
        <begin position="1"/>
        <end position="357"/>
    </location>
</feature>
<feature type="active site" evidence="1">
    <location>
        <position position="160"/>
    </location>
</feature>
<dbReference type="EC" id="1.2.1.38" evidence="1"/>
<dbReference type="EMBL" id="BX548175">
    <property type="protein sequence ID" value="CAE20884.1"/>
    <property type="status" value="ALT_INIT"/>
    <property type="molecule type" value="Genomic_DNA"/>
</dbReference>
<dbReference type="SMR" id="Q7V7N1"/>
<dbReference type="KEGG" id="pmt:PMT_0709"/>
<dbReference type="eggNOG" id="COG0002">
    <property type="taxonomic scope" value="Bacteria"/>
</dbReference>
<dbReference type="HOGENOM" id="CLU_006384_0_1_3"/>
<dbReference type="UniPathway" id="UPA00068">
    <property type="reaction ID" value="UER00108"/>
</dbReference>
<dbReference type="Proteomes" id="UP000001423">
    <property type="component" value="Chromosome"/>
</dbReference>
<dbReference type="GO" id="GO:0005737">
    <property type="term" value="C:cytoplasm"/>
    <property type="evidence" value="ECO:0007669"/>
    <property type="project" value="UniProtKB-SubCell"/>
</dbReference>
<dbReference type="GO" id="GO:0003942">
    <property type="term" value="F:N-acetyl-gamma-glutamyl-phosphate reductase activity"/>
    <property type="evidence" value="ECO:0007669"/>
    <property type="project" value="UniProtKB-UniRule"/>
</dbReference>
<dbReference type="GO" id="GO:0051287">
    <property type="term" value="F:NAD binding"/>
    <property type="evidence" value="ECO:0007669"/>
    <property type="project" value="InterPro"/>
</dbReference>
<dbReference type="GO" id="GO:0070401">
    <property type="term" value="F:NADP+ binding"/>
    <property type="evidence" value="ECO:0007669"/>
    <property type="project" value="InterPro"/>
</dbReference>
<dbReference type="GO" id="GO:0006526">
    <property type="term" value="P:L-arginine biosynthetic process"/>
    <property type="evidence" value="ECO:0007669"/>
    <property type="project" value="UniProtKB-UniRule"/>
</dbReference>
<dbReference type="CDD" id="cd23934">
    <property type="entry name" value="AGPR_1_C"/>
    <property type="match status" value="1"/>
</dbReference>
<dbReference type="CDD" id="cd17895">
    <property type="entry name" value="AGPR_1_N"/>
    <property type="match status" value="1"/>
</dbReference>
<dbReference type="FunFam" id="3.30.360.10:FF:000014">
    <property type="entry name" value="N-acetyl-gamma-glutamyl-phosphate reductase"/>
    <property type="match status" value="1"/>
</dbReference>
<dbReference type="Gene3D" id="3.30.360.10">
    <property type="entry name" value="Dihydrodipicolinate Reductase, domain 2"/>
    <property type="match status" value="1"/>
</dbReference>
<dbReference type="Gene3D" id="3.40.50.720">
    <property type="entry name" value="NAD(P)-binding Rossmann-like Domain"/>
    <property type="match status" value="1"/>
</dbReference>
<dbReference type="HAMAP" id="MF_00150">
    <property type="entry name" value="ArgC_type1"/>
    <property type="match status" value="1"/>
</dbReference>
<dbReference type="InterPro" id="IPR023013">
    <property type="entry name" value="AGPR_AS"/>
</dbReference>
<dbReference type="InterPro" id="IPR000706">
    <property type="entry name" value="AGPR_type-1"/>
</dbReference>
<dbReference type="InterPro" id="IPR036291">
    <property type="entry name" value="NAD(P)-bd_dom_sf"/>
</dbReference>
<dbReference type="InterPro" id="IPR050085">
    <property type="entry name" value="NAGSA_dehydrogenase"/>
</dbReference>
<dbReference type="InterPro" id="IPR000534">
    <property type="entry name" value="Semialdehyde_DH_NAD-bd"/>
</dbReference>
<dbReference type="NCBIfam" id="TIGR01850">
    <property type="entry name" value="argC"/>
    <property type="match status" value="1"/>
</dbReference>
<dbReference type="PANTHER" id="PTHR32338:SF10">
    <property type="entry name" value="N-ACETYL-GAMMA-GLUTAMYL-PHOSPHATE REDUCTASE, CHLOROPLASTIC-RELATED"/>
    <property type="match status" value="1"/>
</dbReference>
<dbReference type="PANTHER" id="PTHR32338">
    <property type="entry name" value="N-ACETYL-GAMMA-GLUTAMYL-PHOSPHATE REDUCTASE, CHLOROPLASTIC-RELATED-RELATED"/>
    <property type="match status" value="1"/>
</dbReference>
<dbReference type="Pfam" id="PF01118">
    <property type="entry name" value="Semialdhyde_dh"/>
    <property type="match status" value="1"/>
</dbReference>
<dbReference type="Pfam" id="PF22698">
    <property type="entry name" value="Semialdhyde_dhC_1"/>
    <property type="match status" value="1"/>
</dbReference>
<dbReference type="SMART" id="SM00859">
    <property type="entry name" value="Semialdhyde_dh"/>
    <property type="match status" value="1"/>
</dbReference>
<dbReference type="SUPFAM" id="SSF55347">
    <property type="entry name" value="Glyceraldehyde-3-phosphate dehydrogenase-like, C-terminal domain"/>
    <property type="match status" value="1"/>
</dbReference>
<dbReference type="SUPFAM" id="SSF51735">
    <property type="entry name" value="NAD(P)-binding Rossmann-fold domains"/>
    <property type="match status" value="1"/>
</dbReference>
<dbReference type="PROSITE" id="PS01224">
    <property type="entry name" value="ARGC"/>
    <property type="match status" value="1"/>
</dbReference>
<evidence type="ECO:0000255" key="1">
    <source>
        <dbReference type="HAMAP-Rule" id="MF_00150"/>
    </source>
</evidence>
<evidence type="ECO:0000305" key="2"/>
<accession>Q7V7N1</accession>